<reference key="1">
    <citation type="journal article" date="2002" name="J. Hum. Genet.">
        <title>A novel gene is disrupted at a 14q13 breakpoint of t(2;14) in a patient with mirror-image polydactyly of hands and feet.</title>
        <authorList>
            <person name="Kondoh S."/>
            <person name="Sugawara H."/>
            <person name="Harada N."/>
            <person name="Matsumoto N."/>
            <person name="Ohashi H."/>
            <person name="Sato M."/>
            <person name="Kantaputra P.N."/>
            <person name="Ogino T."/>
            <person name="Tomita H."/>
            <person name="Ohta T."/>
            <person name="Kishino T."/>
            <person name="Fukushima Y."/>
            <person name="Niikawa N."/>
            <person name="Yoshiura K."/>
        </authorList>
    </citation>
    <scope>NUCLEOTIDE SEQUENCE [MRNA] (ISOFORM 1)</scope>
    <scope>TISSUE SPECIFICITY</scope>
    <scope>INVOLVEMENT IN MIP</scope>
    <source>
        <tissue>Fetal brain</tissue>
        <tissue>Skeletal muscle</tissue>
    </source>
</reference>
<reference key="2">
    <citation type="journal article" date="2007" name="BMC Genomics">
        <title>The full-ORF clone resource of the German cDNA consortium.</title>
        <authorList>
            <person name="Bechtel S."/>
            <person name="Rosenfelder H."/>
            <person name="Duda A."/>
            <person name="Schmidt C.P."/>
            <person name="Ernst U."/>
            <person name="Wellenreuther R."/>
            <person name="Mehrle A."/>
            <person name="Schuster C."/>
            <person name="Bahr A."/>
            <person name="Bloecker H."/>
            <person name="Heubner D."/>
            <person name="Hoerlein A."/>
            <person name="Michel G."/>
            <person name="Wedler H."/>
            <person name="Koehrer K."/>
            <person name="Ottenwaelder B."/>
            <person name="Poustka A."/>
            <person name="Wiemann S."/>
            <person name="Schupp I."/>
        </authorList>
    </citation>
    <scope>NUCLEOTIDE SEQUENCE [LARGE SCALE MRNA] (ISOFORM 1)</scope>
    <scope>PARTIAL NUCLEOTIDE SEQUENCE [LARGE SCALE MRNA] (ISOFORM 3)</scope>
    <source>
        <tissue>Fetal kidney</tissue>
        <tissue>Heart</tissue>
    </source>
</reference>
<reference key="3">
    <citation type="submission" date="2005-09" db="EMBL/GenBank/DDBJ databases">
        <authorList>
            <person name="Mural R.J."/>
            <person name="Istrail S."/>
            <person name="Sutton G.G."/>
            <person name="Florea L."/>
            <person name="Halpern A.L."/>
            <person name="Mobarry C.M."/>
            <person name="Lippert R."/>
            <person name="Walenz B."/>
            <person name="Shatkay H."/>
            <person name="Dew I."/>
            <person name="Miller J.R."/>
            <person name="Flanigan M.J."/>
            <person name="Edwards N.J."/>
            <person name="Bolanos R."/>
            <person name="Fasulo D."/>
            <person name="Halldorsson B.V."/>
            <person name="Hannenhalli S."/>
            <person name="Turner R."/>
            <person name="Yooseph S."/>
            <person name="Lu F."/>
            <person name="Nusskern D.R."/>
            <person name="Shue B.C."/>
            <person name="Zheng X.H."/>
            <person name="Zhong F."/>
            <person name="Delcher A.L."/>
            <person name="Huson D.H."/>
            <person name="Kravitz S.A."/>
            <person name="Mouchard L."/>
            <person name="Reinert K."/>
            <person name="Remington K.A."/>
            <person name="Clark A.G."/>
            <person name="Waterman M.S."/>
            <person name="Eichler E.E."/>
            <person name="Adams M.D."/>
            <person name="Hunkapiller M.W."/>
            <person name="Myers E.W."/>
            <person name="Venter J.C."/>
        </authorList>
    </citation>
    <scope>NUCLEOTIDE SEQUENCE [LARGE SCALE GENOMIC DNA]</scope>
</reference>
<reference key="4">
    <citation type="journal article" date="2004" name="Genome Res.">
        <title>The status, quality, and expansion of the NIH full-length cDNA project: the Mammalian Gene Collection (MGC).</title>
        <authorList>
            <consortium name="The MGC Project Team"/>
        </authorList>
    </citation>
    <scope>NUCLEOTIDE SEQUENCE [LARGE SCALE MRNA] (ISOFORM 2)</scope>
    <source>
        <tissue>Fetal brain</tissue>
    </source>
</reference>
<sequence length="442" mass="51537">MENWSKDITHSYLEQETTGINKSTQPDEQLTMNSEKSMHRKSTELVNEITCENTEWPGQRSTNFQIISSYPDDESVYCTTEKYNVMEHRHNDMHYECMTPCQVTSDSDKEKTIAFLLKELDILRTSNKKLQQKLAKEDKEQRKLKFKLELQEKETEAKIAEKTAALVEEVYFAQKERDEAVMSRLQLAIEERDEAIARAKHMEMSLKVLENINPEENDMTLQELLNRINNADTGIAIQKNGAIIVDRIYKTKECKMRITAEEMSALIEERDAALSKCKRLEQELHHVKEQNQTSANNMRHLTAENNQERALKAKLLSMQQARETAVQQYKKLEEEIQTLRVYYSLHKSLSQEENLKDQFNYTLSTYEEALKNRENIVSITQQQNEELATQLQQALTERANMELQLQHAREASQVANEKVQKLERLVDVLRKKVGTGTMRTVI</sequence>
<evidence type="ECO:0000255" key="1"/>
<evidence type="ECO:0000256" key="2">
    <source>
        <dbReference type="SAM" id="MobiDB-lite"/>
    </source>
</evidence>
<evidence type="ECO:0000269" key="3">
    <source>
    </source>
</evidence>
<evidence type="ECO:0000303" key="4">
    <source>
    </source>
</evidence>
<evidence type="ECO:0000305" key="5"/>
<proteinExistence type="evidence at protein level"/>
<comment type="interaction">
    <interactant intactId="EBI-2548751">
        <id>Q8TD10</id>
    </interactant>
    <interactant intactId="EBI-8643161">
        <id>Q9NX04</id>
        <label>AIRIM</label>
    </interactant>
    <organismsDiffer>false</organismsDiffer>
    <experiments>3</experiments>
</comment>
<comment type="interaction">
    <interactant intactId="EBI-2548751">
        <id>Q8TD10</id>
    </interactant>
    <interactant intactId="EBI-5661893">
        <id>Q86SG2</id>
        <label>ANKRD23</label>
    </interactant>
    <organismsDiffer>false</organismsDiffer>
    <experiments>3</experiments>
</comment>
<comment type="interaction">
    <interactant intactId="EBI-2548751">
        <id>Q8TD10</id>
    </interactant>
    <interactant intactId="EBI-355815">
        <id>P48047</id>
        <label>ATP5PO</label>
    </interactant>
    <organismsDiffer>false</organismsDiffer>
    <experiments>3</experiments>
</comment>
<comment type="interaction">
    <interactant intactId="EBI-2548751">
        <id>Q8TD10</id>
    </interactant>
    <interactant intactId="EBI-745073">
        <id>Q9BXY8</id>
        <label>BEX2</label>
    </interactant>
    <organismsDiffer>false</organismsDiffer>
    <experiments>3</experiments>
</comment>
<comment type="interaction">
    <interactant intactId="EBI-2548751">
        <id>Q8TD10</id>
    </interactant>
    <interactant intactId="EBI-358049">
        <id>Q13895</id>
        <label>BYSL</label>
    </interactant>
    <organismsDiffer>false</organismsDiffer>
    <experiments>8</experiments>
</comment>
<comment type="interaction">
    <interactant intactId="EBI-2548751">
        <id>Q8TD10</id>
    </interactant>
    <interactant intactId="EBI-739879">
        <id>Q53TS8</id>
        <label>C2CD6</label>
    </interactant>
    <organismsDiffer>false</organismsDiffer>
    <experiments>3</experiments>
</comment>
<comment type="interaction">
    <interactant intactId="EBI-2548751">
        <id>Q8TD10</id>
    </interactant>
    <interactant intactId="EBI-744556">
        <id>Q96HB5</id>
        <label>CCDC120</label>
    </interactant>
    <organismsDiffer>false</organismsDiffer>
    <experiments>6</experiments>
</comment>
<comment type="interaction">
    <interactant intactId="EBI-2548751">
        <id>Q8TD10</id>
    </interactant>
    <interactant intactId="EBI-10749669">
        <id>Q8IYE0</id>
        <label>CCDC146</label>
    </interactant>
    <organismsDiffer>false</organismsDiffer>
    <experiments>3</experiments>
</comment>
<comment type="interaction">
    <interactant intactId="EBI-2548751">
        <id>Q8TD10</id>
    </interactant>
    <interactant intactId="EBI-356673">
        <id>P49368</id>
        <label>CCT3</label>
    </interactant>
    <organismsDiffer>false</organismsDiffer>
    <experiments>6</experiments>
</comment>
<comment type="interaction">
    <interactant intactId="EBI-2548751">
        <id>Q8TD10</id>
    </interactant>
    <interactant intactId="EBI-295634">
        <id>Q16543</id>
        <label>CDC37</label>
    </interactant>
    <organismsDiffer>false</organismsDiffer>
    <experiments>3</experiments>
</comment>
<comment type="interaction">
    <interactant intactId="EBI-2548751">
        <id>Q8TD10</id>
    </interactant>
    <interactant intactId="EBI-746238">
        <id>Q07002</id>
        <label>CDK18</label>
    </interactant>
    <organismsDiffer>false</organismsDiffer>
    <experiments>3</experiments>
</comment>
<comment type="interaction">
    <interactant intactId="EBI-2548751">
        <id>Q8TD10</id>
    </interactant>
    <interactant intactId="EBI-456371">
        <id>P61024</id>
        <label>CKS1B</label>
    </interactant>
    <organismsDiffer>false</organismsDiffer>
    <experiments>3</experiments>
</comment>
<comment type="interaction">
    <interactant intactId="EBI-2548751">
        <id>Q8TD10</id>
    </interactant>
    <interactant intactId="EBI-77321">
        <id>Q9UER7</id>
        <label>DAXX</label>
    </interactant>
    <organismsDiffer>false</organismsDiffer>
    <experiments>3</experiments>
</comment>
<comment type="interaction">
    <interactant intactId="EBI-2548751">
        <id>Q8TD10</id>
    </interactant>
    <interactant intactId="EBI-769261">
        <id>Q96JC9</id>
        <label>EAF1</label>
    </interactant>
    <organismsDiffer>false</organismsDiffer>
    <experiments>3</experiments>
</comment>
<comment type="interaction">
    <interactant intactId="EBI-2548751">
        <id>Q8TD10</id>
    </interactant>
    <interactant intactId="EBI-398610">
        <id>O60573</id>
        <label>EIF4E2</label>
    </interactant>
    <organismsDiffer>false</organismsDiffer>
    <experiments>3</experiments>
</comment>
<comment type="interaction">
    <interactant intactId="EBI-2548751">
        <id>Q8TD10</id>
    </interactant>
    <interactant intactId="EBI-744099">
        <id>Q9H0I2</id>
        <label>ENKD1</label>
    </interactant>
    <organismsDiffer>false</organismsDiffer>
    <experiments>6</experiments>
</comment>
<comment type="interaction">
    <interactant intactId="EBI-2548751">
        <id>Q8TD10</id>
    </interactant>
    <interactant intactId="EBI-742102">
        <id>Q8IYI6</id>
        <label>EXOC8</label>
    </interactant>
    <organismsDiffer>false</organismsDiffer>
    <experiments>3</experiments>
</comment>
<comment type="interaction">
    <interactant intactId="EBI-2548751">
        <id>Q8TD10</id>
    </interactant>
    <interactant intactId="EBI-11986315">
        <id>Q9H5Z6-2</id>
        <label>FAM124B</label>
    </interactant>
    <organismsDiffer>false</organismsDiffer>
    <experiments>3</experiments>
</comment>
<comment type="interaction">
    <interactant intactId="EBI-2548751">
        <id>Q8TD10</id>
    </interactant>
    <interactant intactId="EBI-719941">
        <id>Q3B820</id>
        <label>FAM161A</label>
    </interactant>
    <organismsDiffer>false</organismsDiffer>
    <experiments>6</experiments>
</comment>
<comment type="interaction">
    <interactant intactId="EBI-2548751">
        <id>Q8TD10</id>
    </interactant>
    <interactant intactId="EBI-7225287">
        <id>Q96MY7</id>
        <label>FAM161B</label>
    </interactant>
    <organismsDiffer>false</organismsDiffer>
    <experiments>3</experiments>
</comment>
<comment type="interaction">
    <interactant intactId="EBI-2548751">
        <id>Q8TD10</id>
    </interactant>
    <interactant intactId="EBI-6658203">
        <id>Q86YD7</id>
        <label>FAM90A1</label>
    </interactant>
    <organismsDiffer>false</organismsDiffer>
    <experiments>3</experiments>
</comment>
<comment type="interaction">
    <interactant intactId="EBI-2548751">
        <id>Q8TD10</id>
    </interactant>
    <interactant intactId="EBI-10244131">
        <id>Q8TES7-6</id>
        <label>FBF1</label>
    </interactant>
    <organismsDiffer>false</organismsDiffer>
    <experiments>3</experiments>
</comment>
<comment type="interaction">
    <interactant intactId="EBI-2548751">
        <id>Q8TD10</id>
    </interactant>
    <interactant intactId="EBI-372506">
        <id>Q8TAE8</id>
        <label>GADD45GIP1</label>
    </interactant>
    <organismsDiffer>false</organismsDiffer>
    <experiments>3</experiments>
</comment>
<comment type="interaction">
    <interactant intactId="EBI-2548751">
        <id>Q8TD10</id>
    </interactant>
    <interactant intactId="EBI-744104">
        <id>P55040</id>
        <label>GEM</label>
    </interactant>
    <organismsDiffer>false</organismsDiffer>
    <experiments>3</experiments>
</comment>
<comment type="interaction">
    <interactant intactId="EBI-2548751">
        <id>Q8TD10</id>
    </interactant>
    <interactant intactId="EBI-2514791">
        <id>Q96CS2</id>
        <label>HAUS1</label>
    </interactant>
    <organismsDiffer>false</organismsDiffer>
    <experiments>3</experiments>
</comment>
<comment type="interaction">
    <interactant intactId="EBI-2548751">
        <id>Q8TD10</id>
    </interactant>
    <interactant intactId="EBI-747204">
        <id>Q9UKT9</id>
        <label>IKZF3</label>
    </interactant>
    <organismsDiffer>false</organismsDiffer>
    <experiments>3</experiments>
</comment>
<comment type="interaction">
    <interactant intactId="EBI-2548751">
        <id>Q8TD10</id>
    </interactant>
    <interactant intactId="EBI-11997992">
        <id>Q8NAX2</id>
        <label>KDF1</label>
    </interactant>
    <organismsDiffer>false</organismsDiffer>
    <experiments>3</experiments>
</comment>
<comment type="interaction">
    <interactant intactId="EBI-2548751">
        <id>Q8TD10</id>
    </interactant>
    <interactant intactId="EBI-3437878">
        <id>Q86T90</id>
        <label>KIAA1328</label>
    </interactant>
    <organismsDiffer>false</organismsDiffer>
    <experiments>3</experiments>
</comment>
<comment type="interaction">
    <interactant intactId="EBI-2548751">
        <id>Q8TD10</id>
    </interactant>
    <interactant intactId="EBI-8472129">
        <id>Q9HAQ2</id>
        <label>KIF9</label>
    </interactant>
    <organismsDiffer>false</organismsDiffer>
    <experiments>3</experiments>
</comment>
<comment type="interaction">
    <interactant intactId="EBI-2548751">
        <id>Q8TD10</id>
    </interactant>
    <interactant intactId="EBI-1052105">
        <id>Q14657</id>
        <label>LAGE3</label>
    </interactant>
    <organismsDiffer>false</organismsDiffer>
    <experiments>3</experiments>
</comment>
<comment type="interaction">
    <interactant intactId="EBI-2548751">
        <id>Q8TD10</id>
    </interactant>
    <interactant intactId="EBI-726510">
        <id>Q96BZ8</id>
        <label>LENG1</label>
    </interactant>
    <organismsDiffer>false</organismsDiffer>
    <experiments>3</experiments>
</comment>
<comment type="interaction">
    <interactant intactId="EBI-2548751">
        <id>Q8TD10</id>
    </interactant>
    <interactant intactId="EBI-1045155">
        <id>P43360</id>
        <label>MAGEA6</label>
    </interactant>
    <organismsDiffer>false</organismsDiffer>
    <experiments>6</experiments>
</comment>
<comment type="interaction">
    <interactant intactId="EBI-2548751">
        <id>Q8TD10</id>
    </interactant>
    <interactant intactId="EBI-11978579">
        <id>O95983-2</id>
        <label>MBD3</label>
    </interactant>
    <organismsDiffer>false</organismsDiffer>
    <experiments>3</experiments>
</comment>
<comment type="interaction">
    <interactant intactId="EBI-2548751">
        <id>Q8TD10</id>
    </interactant>
    <interactant intactId="EBI-355924">
        <id>P33993</id>
        <label>MCM7</label>
    </interactant>
    <organismsDiffer>false</organismsDiffer>
    <experiments>3</experiments>
</comment>
<comment type="interaction">
    <interactant intactId="EBI-2548751">
        <id>Q8TD10</id>
    </interactant>
    <interactant intactId="EBI-1048159">
        <id>P55081</id>
        <label>MFAP1</label>
    </interactant>
    <organismsDiffer>false</organismsDiffer>
    <experiments>3</experiments>
</comment>
<comment type="interaction">
    <interactant intactId="EBI-2548751">
        <id>Q8TD10</id>
    </interactant>
    <interactant intactId="EBI-2548751">
        <id>Q8TD10</id>
        <label>MIPOL1</label>
    </interactant>
    <organismsDiffer>false</organismsDiffer>
    <experiments>4</experiments>
</comment>
<comment type="interaction">
    <interactant intactId="EBI-2548751">
        <id>Q8TD10</id>
    </interactant>
    <interactant intactId="EBI-742459">
        <id>Q9BU76</id>
        <label>MMTAG2</label>
    </interactant>
    <organismsDiffer>false</organismsDiffer>
    <experiments>3</experiments>
</comment>
<comment type="interaction">
    <interactant intactId="EBI-2548751">
        <id>Q8TD10</id>
    </interactant>
    <interactant intactId="EBI-1757866">
        <id>P00540</id>
        <label>MOS</label>
    </interactant>
    <organismsDiffer>false</organismsDiffer>
    <experiments>3</experiments>
</comment>
<comment type="interaction">
    <interactant intactId="EBI-2548751">
        <id>Q8TD10</id>
    </interactant>
    <interactant intactId="EBI-6952711">
        <id>Q8WY64</id>
        <label>MYLIP</label>
    </interactant>
    <organismsDiffer>false</organismsDiffer>
    <experiments>3</experiments>
</comment>
<comment type="interaction">
    <interactant intactId="EBI-2548751">
        <id>Q8TD10</id>
    </interactant>
    <interactant intactId="EBI-2880203">
        <id>O76041</id>
        <label>NEBL</label>
    </interactant>
    <organismsDiffer>false</organismsDiffer>
    <experiments>3</experiments>
</comment>
<comment type="interaction">
    <interactant intactId="EBI-2548751">
        <id>Q8TD10</id>
    </interactant>
    <interactant intactId="EBI-741158">
        <id>Q96HA8</id>
        <label>NTAQ1</label>
    </interactant>
    <organismsDiffer>false</organismsDiffer>
    <experiments>3</experiments>
</comment>
<comment type="interaction">
    <interactant intactId="EBI-2548751">
        <id>Q8TD10</id>
    </interactant>
    <interactant intactId="EBI-747278">
        <id>P26367</id>
        <label>PAX6</label>
    </interactant>
    <organismsDiffer>false</organismsDiffer>
    <experiments>3</experiments>
</comment>
<comment type="interaction">
    <interactant intactId="EBI-2548751">
        <id>Q8TD10</id>
    </interactant>
    <interactant intactId="EBI-10302990">
        <id>Q9BYU1</id>
        <label>PBX4</label>
    </interactant>
    <organismsDiffer>false</organismsDiffer>
    <experiments>3</experiments>
</comment>
<comment type="interaction">
    <interactant intactId="EBI-2548751">
        <id>Q8TD10</id>
    </interactant>
    <interactant intactId="EBI-602382">
        <id>Q16512</id>
        <label>PKN1</label>
    </interactant>
    <organismsDiffer>false</organismsDiffer>
    <experiments>3</experiments>
</comment>
<comment type="interaction">
    <interactant intactId="EBI-2548751">
        <id>Q8TD10</id>
    </interactant>
    <interactant intactId="EBI-1105153">
        <id>Q96KQ4</id>
        <label>PPP1R13B</label>
    </interactant>
    <organismsDiffer>false</organismsDiffer>
    <experiments>3</experiments>
</comment>
<comment type="interaction">
    <interactant intactId="EBI-2548751">
        <id>Q8TD10</id>
    </interactant>
    <interactant intactId="EBI-1567797">
        <id>Q8WWY3</id>
        <label>PRPF31</label>
    </interactant>
    <organismsDiffer>false</organismsDiffer>
    <experiments>6</experiments>
</comment>
<comment type="interaction">
    <interactant intactId="EBI-2548751">
        <id>Q8TD10</id>
    </interactant>
    <interactant intactId="EBI-740773">
        <id>Q96IZ5</id>
        <label>RBM41</label>
    </interactant>
    <organismsDiffer>false</organismsDiffer>
    <experiments>3</experiments>
</comment>
<comment type="interaction">
    <interactant intactId="EBI-2548751">
        <id>Q8TD10</id>
    </interactant>
    <interactant intactId="EBI-743428">
        <id>Q9P2K3</id>
        <label>RCOR3</label>
    </interactant>
    <organismsDiffer>false</organismsDiffer>
    <experiments>3</experiments>
</comment>
<comment type="interaction">
    <interactant intactId="EBI-2548751">
        <id>Q8TD10</id>
    </interactant>
    <interactant intactId="EBI-10829018">
        <id>Q04864-2</id>
        <label>REL</label>
    </interactant>
    <organismsDiffer>false</organismsDiffer>
    <experiments>3</experiments>
</comment>
<comment type="interaction">
    <interactant intactId="EBI-2548751">
        <id>Q8TD10</id>
    </interactant>
    <interactant intactId="EBI-16428950">
        <id>A0A0S2Z4G9</id>
        <label>RNF6</label>
    </interactant>
    <organismsDiffer>false</organismsDiffer>
    <experiments>3</experiments>
</comment>
<comment type="interaction">
    <interactant intactId="EBI-2548751">
        <id>Q8TD10</id>
    </interactant>
    <interactant intactId="EBI-10217913">
        <id>Q14D33</id>
        <label>RTP5</label>
    </interactant>
    <organismsDiffer>false</organismsDiffer>
    <experiments>3</experiments>
</comment>
<comment type="interaction">
    <interactant intactId="EBI-2548751">
        <id>Q8TD10</id>
    </interactant>
    <interactant intactId="EBI-748391">
        <id>Q9BWG6</id>
        <label>SCNM1</label>
    </interactant>
    <organismsDiffer>false</organismsDiffer>
    <experiments>6</experiments>
</comment>
<comment type="interaction">
    <interactant intactId="EBI-2548751">
        <id>Q8TD10</id>
    </interactant>
    <interactant intactId="EBI-455078">
        <id>Q969G3</id>
        <label>SMARCE1</label>
    </interactant>
    <organismsDiffer>false</organismsDiffer>
    <experiments>6</experiments>
</comment>
<comment type="interaction">
    <interactant intactId="EBI-2548751">
        <id>Q8TD10</id>
    </interactant>
    <interactant intactId="EBI-12854506">
        <id>O60641-3</id>
        <label>SNAP91</label>
    </interactant>
    <organismsDiffer>false</organismsDiffer>
    <experiments>3</experiments>
</comment>
<comment type="interaction">
    <interactant intactId="EBI-2548751">
        <id>Q8TD10</id>
    </interactant>
    <interactant intactId="EBI-18173613">
        <id>Q9NY99-2</id>
        <label>SNTG2</label>
    </interactant>
    <organismsDiffer>false</organismsDiffer>
    <experiments>3</experiments>
</comment>
<comment type="interaction">
    <interactant intactId="EBI-2548751">
        <id>Q8TD10</id>
    </interactant>
    <interactant intactId="EBI-12029182">
        <id>Q6ZRS2-3</id>
        <label>SRCAP</label>
    </interactant>
    <organismsDiffer>false</organismsDiffer>
    <experiments>3</experiments>
</comment>
<comment type="interaction">
    <interactant intactId="EBI-2548751">
        <id>Q8TD10</id>
    </interactant>
    <interactant intactId="EBI-10295431">
        <id>Q99909</id>
        <label>SSX3</label>
    </interactant>
    <organismsDiffer>false</organismsDiffer>
    <experiments>7</experiments>
</comment>
<comment type="interaction">
    <interactant intactId="EBI-2548751">
        <id>Q8TD10</id>
    </interactant>
    <interactant intactId="EBI-725557">
        <id>Q9NZ72</id>
        <label>STMN3</label>
    </interactant>
    <organismsDiffer>false</organismsDiffer>
    <experiments>3</experiments>
</comment>
<comment type="interaction">
    <interactant intactId="EBI-2548751">
        <id>Q8TD10</id>
    </interactant>
    <interactant intactId="EBI-3258000">
        <id>Q9P0N9</id>
        <label>TBC1D7</label>
    </interactant>
    <organismsDiffer>false</organismsDiffer>
    <experiments>3</experiments>
</comment>
<comment type="interaction">
    <interactant intactId="EBI-2548751">
        <id>Q8TD10</id>
    </interactant>
    <interactant intactId="EBI-740781">
        <id>Q9BT92</id>
        <label>TCHP</label>
    </interactant>
    <organismsDiffer>false</organismsDiffer>
    <experiments>3</experiments>
</comment>
<comment type="interaction">
    <interactant intactId="EBI-2548751">
        <id>Q8TD10</id>
    </interactant>
    <interactant intactId="EBI-372432">
        <id>Q8WW01</id>
        <label>TSEN15</label>
    </interactant>
    <organismsDiffer>false</organismsDiffer>
    <experiments>3</experiments>
</comment>
<comment type="interaction">
    <interactant intactId="EBI-2548751">
        <id>Q8TD10</id>
    </interactant>
    <interactant intactId="EBI-10241197">
        <id>Q3SY00</id>
        <label>TSGA10IP</label>
    </interactant>
    <organismsDiffer>false</organismsDiffer>
    <experiments>3</experiments>
</comment>
<comment type="interaction">
    <interactant intactId="EBI-2548751">
        <id>Q8TD10</id>
    </interactant>
    <interactant intactId="EBI-10274410">
        <id>Q9H892-2</id>
        <label>TTC12</label>
    </interactant>
    <organismsDiffer>false</organismsDiffer>
    <experiments>6</experiments>
</comment>
<comment type="interaction">
    <interactant intactId="EBI-2548751">
        <id>Q8TD10</id>
    </interactant>
    <interactant intactId="EBI-9090990">
        <id>Q5W5X9-3</id>
        <label>TTC23</label>
    </interactant>
    <organismsDiffer>false</organismsDiffer>
    <experiments>3</experiments>
</comment>
<comment type="interaction">
    <interactant intactId="EBI-2548751">
        <id>Q8TD10</id>
    </interactant>
    <interactant intactId="EBI-2932492">
        <id>Q99757</id>
        <label>TXN2</label>
    </interactant>
    <organismsDiffer>false</organismsDiffer>
    <experiments>3</experiments>
</comment>
<comment type="interaction">
    <interactant intactId="EBI-2548751">
        <id>Q8TD10</id>
    </interactant>
    <interactant intactId="EBI-10180829">
        <id>Q7KZS0</id>
        <label>UBE2I</label>
    </interactant>
    <organismsDiffer>false</organismsDiffer>
    <experiments>3</experiments>
</comment>
<comment type="interaction">
    <interactant intactId="EBI-2548751">
        <id>Q8TD10</id>
    </interactant>
    <interactant intactId="EBI-473850">
        <id>P61086</id>
        <label>UBE2K</label>
    </interactant>
    <organismsDiffer>false</organismsDiffer>
    <experiments>6</experiments>
</comment>
<comment type="interaction">
    <interactant intactId="EBI-2548751">
        <id>Q8TD10</id>
    </interactant>
    <interactant intactId="EBI-954308">
        <id>Q9Y6N9</id>
        <label>USH1C</label>
    </interactant>
    <organismsDiffer>false</organismsDiffer>
    <experiments>3</experiments>
</comment>
<comment type="interaction">
    <interactant intactId="EBI-2548751">
        <id>Q8TD10</id>
    </interactant>
    <interactant intactId="EBI-747711">
        <id>Q68CQ4</id>
        <label>UTP25</label>
    </interactant>
    <organismsDiffer>false</organismsDiffer>
    <experiments>4</experiments>
</comment>
<comment type="interaction">
    <interactant intactId="EBI-2548751">
        <id>Q8TD10</id>
    </interactant>
    <interactant intactId="EBI-3439227">
        <id>Q8N5A5</id>
        <label>ZGPAT</label>
    </interactant>
    <organismsDiffer>false</organismsDiffer>
    <experiments>3</experiments>
</comment>
<comment type="interaction">
    <interactant intactId="EBI-2548751">
        <id>Q8TD10</id>
    </interactant>
    <interactant intactId="EBI-10183064">
        <id>Q8N5A5-2</id>
        <label>ZGPAT</label>
    </interactant>
    <organismsDiffer>false</organismsDiffer>
    <experiments>6</experiments>
</comment>
<comment type="interaction">
    <interactant intactId="EBI-2548751">
        <id>Q8TD10</id>
    </interactant>
    <interactant intactId="EBI-16429014">
        <id>A0A0S2Z5X4</id>
        <label>ZNF688</label>
    </interactant>
    <organismsDiffer>false</organismsDiffer>
    <experiments>3</experiments>
</comment>
<comment type="interaction">
    <interactant intactId="EBI-2548751">
        <id>Q8TD10</id>
    </interactant>
    <interactant intactId="EBI-10255097">
        <id>Q6ZN96</id>
    </interactant>
    <organismsDiffer>false</organismsDiffer>
    <experiments>3</experiments>
</comment>
<comment type="alternative products">
    <event type="alternative splicing"/>
    <isoform>
        <id>Q8TD10-1</id>
        <name>1</name>
        <sequence type="displayed"/>
    </isoform>
    <isoform>
        <id>Q8TD10-2</id>
        <name>2</name>
        <sequence type="described" ref="VSP_009460"/>
    </isoform>
    <isoform>
        <id>Q8TD10-3</id>
        <name>3</name>
        <sequence type="described" ref="VSP_009461 VSP_009462"/>
    </isoform>
</comment>
<comment type="tissue specificity">
    <text evidence="3">Expressed very weakly in heart, liver, skeletal muscle, kidney, pancreas and fetal kidney. Not detected in brain, placenta and lung.</text>
</comment>
<comment type="disease">
    <text evidence="3">A chromosomal aberration involving MIPOL1 is found in a patient with mirror-image polydactyly of hands and feet without other anomalies (MIP). Translocation t(2;14)(p23.3;q13). MIP is a very rare congenital anomaly characterized by mirror-image duplication of digits. MIP is occasionally associated with dimelia of the ulna and fibula, tibial and/or fibular hypoplasia, nasal abnormality and other malformations. Most MIP cases are sporadic, but very rare parent-child transmissions observed in familial cases suggest an autosomal mode of inheritance.</text>
</comment>
<comment type="miscellaneous">
    <molecule>Isoform 3</molecule>
    <text evidence="5">May be due to a competing acceptor splice site.</text>
</comment>
<accession>Q8TD10</accession>
<accession>D3DSA4</accession>
<accession>Q7Z3J0</accession>
<accession>Q8IV14</accession>
<protein>
    <recommendedName>
        <fullName>Mirror-image polydactyly gene 1 protein</fullName>
    </recommendedName>
</protein>
<name>MIPO1_HUMAN</name>
<gene>
    <name type="primary">MIPOL1</name>
</gene>
<dbReference type="EMBL" id="AY059470">
    <property type="protein sequence ID" value="AAL27798.1"/>
    <property type="molecule type" value="mRNA"/>
</dbReference>
<dbReference type="EMBL" id="BX537396">
    <property type="protein sequence ID" value="CAD97638.1"/>
    <property type="molecule type" value="mRNA"/>
</dbReference>
<dbReference type="EMBL" id="BX537870">
    <property type="protein sequence ID" value="CAD97872.1"/>
    <property type="molecule type" value="mRNA"/>
</dbReference>
<dbReference type="EMBL" id="CH471078">
    <property type="protein sequence ID" value="EAW65848.1"/>
    <property type="molecule type" value="Genomic_DNA"/>
</dbReference>
<dbReference type="EMBL" id="CH471078">
    <property type="protein sequence ID" value="EAW65850.1"/>
    <property type="molecule type" value="Genomic_DNA"/>
</dbReference>
<dbReference type="EMBL" id="BC035870">
    <property type="protein sequence ID" value="AAH35870.1"/>
    <property type="molecule type" value="mRNA"/>
</dbReference>
<dbReference type="CCDS" id="CCDS9664.1">
    <molecule id="Q8TD10-1"/>
</dbReference>
<dbReference type="RefSeq" id="NP_001182225.1">
    <molecule id="Q8TD10-1"/>
    <property type="nucleotide sequence ID" value="NM_001195296.2"/>
</dbReference>
<dbReference type="RefSeq" id="NP_001182226.1">
    <molecule id="Q8TD10-1"/>
    <property type="nucleotide sequence ID" value="NM_001195297.2"/>
</dbReference>
<dbReference type="RefSeq" id="NP_001374996.1">
    <molecule id="Q8TD10-1"/>
    <property type="nucleotide sequence ID" value="NM_001388067.1"/>
</dbReference>
<dbReference type="RefSeq" id="NP_001374997.1">
    <molecule id="Q8TD10-1"/>
    <property type="nucleotide sequence ID" value="NM_001388068.1"/>
</dbReference>
<dbReference type="RefSeq" id="NP_620059.1">
    <molecule id="Q8TD10-1"/>
    <property type="nucleotide sequence ID" value="NM_138731.7"/>
</dbReference>
<dbReference type="RefSeq" id="XP_016876492.1">
    <property type="nucleotide sequence ID" value="XM_017021003.1"/>
</dbReference>
<dbReference type="RefSeq" id="XP_016876493.1">
    <property type="nucleotide sequence ID" value="XM_017021004.1"/>
</dbReference>
<dbReference type="RefSeq" id="XP_016876494.1">
    <property type="nucleotide sequence ID" value="XM_017021005.1"/>
</dbReference>
<dbReference type="SMR" id="Q8TD10"/>
<dbReference type="BioGRID" id="126903">
    <property type="interactions" value="105"/>
</dbReference>
<dbReference type="FunCoup" id="Q8TD10">
    <property type="interactions" value="1679"/>
</dbReference>
<dbReference type="IntAct" id="Q8TD10">
    <property type="interactions" value="96"/>
</dbReference>
<dbReference type="MINT" id="Q8TD10"/>
<dbReference type="STRING" id="9606.ENSP00000333539"/>
<dbReference type="iPTMnet" id="Q8TD10"/>
<dbReference type="PhosphoSitePlus" id="Q8TD10"/>
<dbReference type="SwissPalm" id="Q8TD10"/>
<dbReference type="BioMuta" id="MIPOL1"/>
<dbReference type="DMDM" id="44888154"/>
<dbReference type="jPOST" id="Q8TD10"/>
<dbReference type="MassIVE" id="Q8TD10"/>
<dbReference type="PaxDb" id="9606-ENSP00000333539"/>
<dbReference type="PeptideAtlas" id="Q8TD10"/>
<dbReference type="ProteomicsDB" id="74212">
    <molecule id="Q8TD10-1"/>
</dbReference>
<dbReference type="ProteomicsDB" id="74213">
    <molecule id="Q8TD10-2"/>
</dbReference>
<dbReference type="ProteomicsDB" id="74214">
    <molecule id="Q8TD10-3"/>
</dbReference>
<dbReference type="Antibodypedia" id="137">
    <property type="antibodies" value="125 antibodies from 20 providers"/>
</dbReference>
<dbReference type="DNASU" id="145282"/>
<dbReference type="Ensembl" id="ENST00000327441.11">
    <molecule id="Q8TD10-1"/>
    <property type="protein sequence ID" value="ENSP00000333539.7"/>
    <property type="gene ID" value="ENSG00000151338.21"/>
</dbReference>
<dbReference type="Ensembl" id="ENST00000396294.7">
    <molecule id="Q8TD10-1"/>
    <property type="protein sequence ID" value="ENSP00000379589.2"/>
    <property type="gene ID" value="ENSG00000151338.21"/>
</dbReference>
<dbReference type="Ensembl" id="ENST00000684589.1">
    <molecule id="Q8TD10-1"/>
    <property type="protein sequence ID" value="ENSP00000506738.1"/>
    <property type="gene ID" value="ENSG00000151338.21"/>
</dbReference>
<dbReference type="Ensembl" id="ENST00000698512.1">
    <molecule id="Q8TD10-1"/>
    <property type="protein sequence ID" value="ENSP00000513762.1"/>
    <property type="gene ID" value="ENSG00000151338.21"/>
</dbReference>
<dbReference type="GeneID" id="145282"/>
<dbReference type="KEGG" id="hsa:145282"/>
<dbReference type="MANE-Select" id="ENST00000684589.1">
    <property type="protein sequence ID" value="ENSP00000506738.1"/>
    <property type="RefSeq nucleotide sequence ID" value="NM_001388067.1"/>
    <property type="RefSeq protein sequence ID" value="NP_001374996.1"/>
</dbReference>
<dbReference type="UCSC" id="uc001wuc.4">
    <molecule id="Q8TD10-1"/>
    <property type="organism name" value="human"/>
</dbReference>
<dbReference type="AGR" id="HGNC:21460"/>
<dbReference type="CTD" id="145282"/>
<dbReference type="DisGeNET" id="145282"/>
<dbReference type="GeneCards" id="MIPOL1"/>
<dbReference type="HGNC" id="HGNC:21460">
    <property type="gene designation" value="MIPOL1"/>
</dbReference>
<dbReference type="HPA" id="ENSG00000151338">
    <property type="expression patterns" value="Low tissue specificity"/>
</dbReference>
<dbReference type="MalaCards" id="MIPOL1"/>
<dbReference type="MIM" id="606850">
    <property type="type" value="gene"/>
</dbReference>
<dbReference type="neXtProt" id="NX_Q8TD10"/>
<dbReference type="OpenTargets" id="ENSG00000151338"/>
<dbReference type="PharmGKB" id="PA134883770"/>
<dbReference type="VEuPathDB" id="HostDB:ENSG00000151338"/>
<dbReference type="eggNOG" id="ENOG502QS3V">
    <property type="taxonomic scope" value="Eukaryota"/>
</dbReference>
<dbReference type="GeneTree" id="ENSGT00390000017800"/>
<dbReference type="InParanoid" id="Q8TD10"/>
<dbReference type="OMA" id="ETIRVYY"/>
<dbReference type="OrthoDB" id="6426880at2759"/>
<dbReference type="PAN-GO" id="Q8TD10">
    <property type="GO annotations" value="0 GO annotations based on evolutionary models"/>
</dbReference>
<dbReference type="PhylomeDB" id="Q8TD10"/>
<dbReference type="TreeFam" id="TF331912"/>
<dbReference type="PathwayCommons" id="Q8TD10"/>
<dbReference type="SignaLink" id="Q8TD10"/>
<dbReference type="SIGNOR" id="Q8TD10"/>
<dbReference type="BioGRID-ORCS" id="145282">
    <property type="hits" value="18 hits in 1166 CRISPR screens"/>
</dbReference>
<dbReference type="ChiTaRS" id="MIPOL1">
    <property type="organism name" value="human"/>
</dbReference>
<dbReference type="GenomeRNAi" id="145282"/>
<dbReference type="Pharos" id="Q8TD10">
    <property type="development level" value="Tbio"/>
</dbReference>
<dbReference type="PRO" id="PR:Q8TD10"/>
<dbReference type="Proteomes" id="UP000005640">
    <property type="component" value="Chromosome 14"/>
</dbReference>
<dbReference type="RNAct" id="Q8TD10">
    <property type="molecule type" value="protein"/>
</dbReference>
<dbReference type="Bgee" id="ENSG00000151338">
    <property type="expression patterns" value="Expressed in calcaneal tendon and 116 other cell types or tissues"/>
</dbReference>
<dbReference type="ExpressionAtlas" id="Q8TD10">
    <property type="expression patterns" value="baseline and differential"/>
</dbReference>
<dbReference type="GO" id="GO:0005634">
    <property type="term" value="C:nucleus"/>
    <property type="evidence" value="ECO:0000314"/>
    <property type="project" value="MGI"/>
</dbReference>
<dbReference type="GO" id="GO:0042802">
    <property type="term" value="F:identical protein binding"/>
    <property type="evidence" value="ECO:0000353"/>
    <property type="project" value="IntAct"/>
</dbReference>
<dbReference type="InterPro" id="IPR026175">
    <property type="entry name" value="MIPOL1"/>
</dbReference>
<dbReference type="PANTHER" id="PTHR22089">
    <property type="entry name" value="MIRROR-IMAGE POLYDACTYLY GENE 1 PROTEIN"/>
    <property type="match status" value="1"/>
</dbReference>
<dbReference type="PANTHER" id="PTHR22089:SF2">
    <property type="entry name" value="MIRROR-IMAGE POLYDACTYLY GENE 1 PROTEIN"/>
    <property type="match status" value="1"/>
</dbReference>
<keyword id="KW-0025">Alternative splicing</keyword>
<keyword id="KW-0160">Chromosomal rearrangement</keyword>
<keyword id="KW-0175">Coiled coil</keyword>
<keyword id="KW-1267">Proteomics identification</keyword>
<keyword id="KW-1185">Reference proteome</keyword>
<organism>
    <name type="scientific">Homo sapiens</name>
    <name type="common">Human</name>
    <dbReference type="NCBI Taxonomy" id="9606"/>
    <lineage>
        <taxon>Eukaryota</taxon>
        <taxon>Metazoa</taxon>
        <taxon>Chordata</taxon>
        <taxon>Craniata</taxon>
        <taxon>Vertebrata</taxon>
        <taxon>Euteleostomi</taxon>
        <taxon>Mammalia</taxon>
        <taxon>Eutheria</taxon>
        <taxon>Euarchontoglires</taxon>
        <taxon>Primates</taxon>
        <taxon>Haplorrhini</taxon>
        <taxon>Catarrhini</taxon>
        <taxon>Hominidae</taxon>
        <taxon>Homo</taxon>
    </lineage>
</organism>
<feature type="chain" id="PRO_0000096490" description="Mirror-image polydactyly gene 1 protein">
    <location>
        <begin position="1"/>
        <end position="442"/>
    </location>
</feature>
<feature type="region of interest" description="Disordered" evidence="2">
    <location>
        <begin position="1"/>
        <end position="39"/>
    </location>
</feature>
<feature type="coiled-coil region" evidence="1">
    <location>
        <begin position="107"/>
        <end position="212"/>
    </location>
</feature>
<feature type="coiled-coil region" evidence="1">
    <location>
        <begin position="253"/>
        <end position="435"/>
    </location>
</feature>
<feature type="compositionally biased region" description="Polar residues" evidence="2">
    <location>
        <begin position="12"/>
        <end position="35"/>
    </location>
</feature>
<feature type="splice variant" id="VSP_009460" description="In isoform 2." evidence="4">
    <location>
        <begin position="1"/>
        <end position="181"/>
    </location>
</feature>
<feature type="splice variant" id="VSP_009461" description="In isoform 3." evidence="5">
    <original>ALVEE</original>
    <variation>ERRGV</variation>
    <location>
        <begin position="165"/>
        <end position="169"/>
    </location>
</feature>
<feature type="splice variant" id="VSP_009462" description="In isoform 3." evidence="5">
    <location>
        <begin position="170"/>
        <end position="442"/>
    </location>
</feature>
<feature type="sequence variant" id="VAR_034095" description="In dbSNP:rs35870036.">
    <original>Q</original>
    <variation>L</variation>
    <location>
        <position position="141"/>
    </location>
</feature>